<feature type="chain" id="PRO_0000225352" description="NAD(P)H-quinone oxidoreductase subunit 2, chloroplastic">
    <location>
        <begin position="1"/>
        <end position="497"/>
    </location>
</feature>
<feature type="transmembrane region" description="Helical" evidence="1">
    <location>
        <begin position="13"/>
        <end position="33"/>
    </location>
</feature>
<feature type="transmembrane region" description="Helical" evidence="1">
    <location>
        <begin position="37"/>
        <end position="57"/>
    </location>
</feature>
<feature type="transmembrane region" description="Helical" evidence="1">
    <location>
        <begin position="76"/>
        <end position="96"/>
    </location>
</feature>
<feature type="transmembrane region" description="Helical" evidence="1">
    <location>
        <begin position="103"/>
        <end position="123"/>
    </location>
</feature>
<feature type="transmembrane region" description="Helical" evidence="1">
    <location>
        <begin position="129"/>
        <end position="149"/>
    </location>
</feature>
<feature type="transmembrane region" description="Helical" evidence="1">
    <location>
        <begin position="164"/>
        <end position="184"/>
    </location>
</feature>
<feature type="transmembrane region" description="Helical" evidence="1">
    <location>
        <begin position="206"/>
        <end position="226"/>
    </location>
</feature>
<feature type="transmembrane region" description="Helical" evidence="1">
    <location>
        <begin position="240"/>
        <end position="260"/>
    </location>
</feature>
<feature type="transmembrane region" description="Helical" evidence="1">
    <location>
        <begin position="274"/>
        <end position="294"/>
    </location>
</feature>
<feature type="transmembrane region" description="Helical" evidence="1">
    <location>
        <begin position="311"/>
        <end position="331"/>
    </location>
</feature>
<feature type="transmembrane region" description="Helical" evidence="1">
    <location>
        <begin position="332"/>
        <end position="352"/>
    </location>
</feature>
<feature type="transmembrane region" description="Helical" evidence="1">
    <location>
        <begin position="373"/>
        <end position="393"/>
    </location>
</feature>
<feature type="transmembrane region" description="Helical" evidence="1">
    <location>
        <begin position="406"/>
        <end position="426"/>
    </location>
</feature>
<feature type="transmembrane region" description="Helical" evidence="1">
    <location>
        <begin position="462"/>
        <end position="482"/>
    </location>
</feature>
<evidence type="ECO:0000255" key="1">
    <source>
        <dbReference type="HAMAP-Rule" id="MF_00445"/>
    </source>
</evidence>
<accession>Q32RP6</accession>
<gene>
    <name evidence="1" type="primary">ndhB</name>
</gene>
<keyword id="KW-0150">Chloroplast</keyword>
<keyword id="KW-0472">Membrane</keyword>
<keyword id="KW-0520">NAD</keyword>
<keyword id="KW-0521">NADP</keyword>
<keyword id="KW-0934">Plastid</keyword>
<keyword id="KW-0618">Plastoquinone</keyword>
<keyword id="KW-0874">Quinone</keyword>
<keyword id="KW-0793">Thylakoid</keyword>
<keyword id="KW-1278">Translocase</keyword>
<keyword id="KW-0812">Transmembrane</keyword>
<keyword id="KW-1133">Transmembrane helix</keyword>
<keyword id="KW-0813">Transport</keyword>
<sequence>MPFDPLLFAQNTVILPEIIVIVCLLIVLVLDLIQENSAWLSTISLTGLVAATIALVFQWNHPSANDFLGSIQVDNFTISFRGIITISSALSILISTEYIKRAGMGLAECLIFILTATVGGLFLCGANNLVTVFVSLECLSLSSYLLVGYAKKDVRSNEASMKYLLMGGASSSIIAYGFSWLYGLSGGEIELSKLVDGITNHIDEPIAVWVALACVVVGIGFKLSAFPFHQWTPDVYEGSPTPVVAFFSVGSKAAALALATRMLSIVFPSIESEWHVLLELLALLSMIFGNLIAATQTSMKRMLAYSSISQAGYLIIGIVCGNIYGYTGMITYMVTYIFMNLGAFGCVILFGLRTGTDQIRDYTGLYLKDPLLAFCLSVCLLSLAGIPPLAGFFGKLYLFWCGWKSGLYLLVYVALITSVISMYYYLRVVKSMFTRETKEQSSYVRNYLAPSLSLLPTTSIEVGIALCVFISTTLGFVINPIISATSETLLATNTIVG</sequence>
<comment type="function">
    <text evidence="1">NDH shuttles electrons from NAD(P)H:plastoquinone, via FMN and iron-sulfur (Fe-S) centers, to quinones in the photosynthetic chain and possibly in a chloroplast respiratory chain. The immediate electron acceptor for the enzyme in this species is believed to be plastoquinone. Couples the redox reaction to proton translocation, and thus conserves the redox energy in a proton gradient.</text>
</comment>
<comment type="catalytic activity">
    <reaction evidence="1">
        <text>a plastoquinone + NADH + (n+1) H(+)(in) = a plastoquinol + NAD(+) + n H(+)(out)</text>
        <dbReference type="Rhea" id="RHEA:42608"/>
        <dbReference type="Rhea" id="RHEA-COMP:9561"/>
        <dbReference type="Rhea" id="RHEA-COMP:9562"/>
        <dbReference type="ChEBI" id="CHEBI:15378"/>
        <dbReference type="ChEBI" id="CHEBI:17757"/>
        <dbReference type="ChEBI" id="CHEBI:57540"/>
        <dbReference type="ChEBI" id="CHEBI:57945"/>
        <dbReference type="ChEBI" id="CHEBI:62192"/>
    </reaction>
</comment>
<comment type="catalytic activity">
    <reaction evidence="1">
        <text>a plastoquinone + NADPH + (n+1) H(+)(in) = a plastoquinol + NADP(+) + n H(+)(out)</text>
        <dbReference type="Rhea" id="RHEA:42612"/>
        <dbReference type="Rhea" id="RHEA-COMP:9561"/>
        <dbReference type="Rhea" id="RHEA-COMP:9562"/>
        <dbReference type="ChEBI" id="CHEBI:15378"/>
        <dbReference type="ChEBI" id="CHEBI:17757"/>
        <dbReference type="ChEBI" id="CHEBI:57783"/>
        <dbReference type="ChEBI" id="CHEBI:58349"/>
        <dbReference type="ChEBI" id="CHEBI:62192"/>
    </reaction>
</comment>
<comment type="subunit">
    <text evidence="1">NDH is composed of at least 16 different subunits, 5 of which are encoded in the nucleus.</text>
</comment>
<comment type="subcellular location">
    <subcellularLocation>
        <location evidence="1">Plastid</location>
        <location evidence="1">Chloroplast thylakoid membrane</location>
        <topology evidence="1">Multi-pass membrane protein</topology>
    </subcellularLocation>
</comment>
<comment type="similarity">
    <text evidence="1">Belongs to the complex I subunit 2 family.</text>
</comment>
<name>NU2C_ZYGCR</name>
<dbReference type="EC" id="7.1.1.-" evidence="1"/>
<dbReference type="EMBL" id="AY958086">
    <property type="protein sequence ID" value="AAX45813.1"/>
    <property type="molecule type" value="Genomic_DNA"/>
</dbReference>
<dbReference type="RefSeq" id="YP_636480.1">
    <property type="nucleotide sequence ID" value="NC_008117.1"/>
</dbReference>
<dbReference type="SMR" id="Q32RP6"/>
<dbReference type="GeneID" id="4108133"/>
<dbReference type="GO" id="GO:0009535">
    <property type="term" value="C:chloroplast thylakoid membrane"/>
    <property type="evidence" value="ECO:0007669"/>
    <property type="project" value="UniProtKB-SubCell"/>
</dbReference>
<dbReference type="GO" id="GO:0008137">
    <property type="term" value="F:NADH dehydrogenase (ubiquinone) activity"/>
    <property type="evidence" value="ECO:0007669"/>
    <property type="project" value="InterPro"/>
</dbReference>
<dbReference type="GO" id="GO:0048038">
    <property type="term" value="F:quinone binding"/>
    <property type="evidence" value="ECO:0007669"/>
    <property type="project" value="UniProtKB-KW"/>
</dbReference>
<dbReference type="GO" id="GO:0042773">
    <property type="term" value="P:ATP synthesis coupled electron transport"/>
    <property type="evidence" value="ECO:0007669"/>
    <property type="project" value="InterPro"/>
</dbReference>
<dbReference type="GO" id="GO:0019684">
    <property type="term" value="P:photosynthesis, light reaction"/>
    <property type="evidence" value="ECO:0007669"/>
    <property type="project" value="UniProtKB-UniRule"/>
</dbReference>
<dbReference type="HAMAP" id="MF_00445">
    <property type="entry name" value="NDH1_NuoN_1"/>
    <property type="match status" value="1"/>
</dbReference>
<dbReference type="InterPro" id="IPR010096">
    <property type="entry name" value="NADH-Q_OxRdtase_suN/2"/>
</dbReference>
<dbReference type="InterPro" id="IPR001750">
    <property type="entry name" value="ND/Mrp_TM"/>
</dbReference>
<dbReference type="InterPro" id="IPR045693">
    <property type="entry name" value="Ndh2_N"/>
</dbReference>
<dbReference type="NCBIfam" id="TIGR01770">
    <property type="entry name" value="NDH_I_N"/>
    <property type="match status" value="1"/>
</dbReference>
<dbReference type="NCBIfam" id="NF002701">
    <property type="entry name" value="PRK02504.1"/>
    <property type="match status" value="1"/>
</dbReference>
<dbReference type="PANTHER" id="PTHR22773">
    <property type="entry name" value="NADH DEHYDROGENASE"/>
    <property type="match status" value="1"/>
</dbReference>
<dbReference type="Pfam" id="PF19530">
    <property type="entry name" value="Ndh2_N"/>
    <property type="match status" value="1"/>
</dbReference>
<dbReference type="Pfam" id="PF00361">
    <property type="entry name" value="Proton_antipo_M"/>
    <property type="match status" value="1"/>
</dbReference>
<dbReference type="PRINTS" id="PR01434">
    <property type="entry name" value="NADHDHGNASE5"/>
</dbReference>
<reference key="1">
    <citation type="journal article" date="2005" name="BMC Biol.">
        <title>The complete chloroplast DNA sequences of the charophycean green algae Staurastrum and Zygnema reveal that the chloroplast genome underwent extensive changes during the evolution of the Zygnematales.</title>
        <authorList>
            <person name="Turmel M."/>
            <person name="Otis C."/>
            <person name="Lemieux C."/>
        </authorList>
    </citation>
    <scope>NUCLEOTIDE SEQUENCE [LARGE SCALE GENOMIC DNA]</scope>
</reference>
<geneLocation type="chloroplast"/>
<proteinExistence type="inferred from homology"/>
<organism>
    <name type="scientific">Zygnema circumcarinatum</name>
    <name type="common">Green alga</name>
    <dbReference type="NCBI Taxonomy" id="35869"/>
    <lineage>
        <taxon>Eukaryota</taxon>
        <taxon>Viridiplantae</taxon>
        <taxon>Streptophyta</taxon>
        <taxon>Zygnematophyceae</taxon>
        <taxon>Zygnematophycidae</taxon>
        <taxon>Zygnematales</taxon>
        <taxon>Zygnemataceae</taxon>
        <taxon>Zygnema</taxon>
    </lineage>
</organism>
<protein>
    <recommendedName>
        <fullName evidence="1">NAD(P)H-quinone oxidoreductase subunit 2, chloroplastic</fullName>
        <ecNumber evidence="1">7.1.1.-</ecNumber>
    </recommendedName>
    <alternativeName>
        <fullName evidence="1">NAD(P)H dehydrogenase, subunit 2</fullName>
    </alternativeName>
    <alternativeName>
        <fullName evidence="1">NADH-plastoquinone oxidoreductase subunit 2</fullName>
    </alternativeName>
</protein>